<evidence type="ECO:0000250" key="1">
    <source>
        <dbReference type="UniProtKB" id="P07845"/>
    </source>
</evidence>
<evidence type="ECO:0000250" key="2">
    <source>
        <dbReference type="UniProtKB" id="P61914"/>
    </source>
</evidence>
<evidence type="ECO:0000269" key="3">
    <source>
    </source>
</evidence>
<evidence type="ECO:0000303" key="4">
    <source>
    </source>
</evidence>
<evidence type="ECO:0000303" key="5">
    <source ref="2"/>
</evidence>
<evidence type="ECO:0000305" key="6"/>
<evidence type="ECO:0000312" key="7">
    <source>
        <dbReference type="EMBL" id="EDQ53098.1"/>
    </source>
</evidence>
<evidence type="ECO:0007829" key="8">
    <source>
        <dbReference type="PDB" id="7PUD"/>
    </source>
</evidence>
<keyword id="KW-0002">3D-structure</keyword>
<keyword id="KW-0204">Cytolysis</keyword>
<keyword id="KW-0354">Hemolysis</keyword>
<keyword id="KW-1185">Reference proteome</keyword>
<keyword id="KW-0346">Stress response</keyword>
<name>BRYP_PHYPA</name>
<feature type="chain" id="PRO_0000434639" description="Bryoporin">
    <location>
        <begin position="1"/>
        <end position="178"/>
    </location>
</feature>
<feature type="region of interest" description="Trp-rich region" evidence="1">
    <location>
        <begin position="101"/>
        <end position="117"/>
    </location>
</feature>
<feature type="binding site" evidence="1">
    <location>
        <position position="51"/>
    </location>
    <ligand>
        <name>phosphocholine</name>
        <dbReference type="ChEBI" id="CHEBI:295975"/>
    </ligand>
</feature>
<feature type="binding site" evidence="1">
    <location>
        <position position="83"/>
    </location>
    <ligand>
        <name>phosphocholine</name>
        <dbReference type="ChEBI" id="CHEBI:295975"/>
    </ligand>
</feature>
<feature type="binding site" evidence="1">
    <location>
        <position position="102"/>
    </location>
    <ligand>
        <name>phosphocholine</name>
        <dbReference type="ChEBI" id="CHEBI:295975"/>
    </ligand>
</feature>
<feature type="binding site" evidence="1">
    <location>
        <position position="104"/>
    </location>
    <ligand>
        <name>phosphocholine</name>
        <dbReference type="ChEBI" id="CHEBI:295975"/>
    </ligand>
</feature>
<feature type="binding site" evidence="1">
    <location>
        <position position="134"/>
    </location>
    <ligand>
        <name>phosphocholine</name>
        <dbReference type="ChEBI" id="CHEBI:295975"/>
    </ligand>
</feature>
<feature type="strand" evidence="8">
    <location>
        <begin position="5"/>
        <end position="7"/>
    </location>
</feature>
<feature type="helix" evidence="8">
    <location>
        <begin position="8"/>
        <end position="10"/>
    </location>
</feature>
<feature type="helix" evidence="8">
    <location>
        <begin position="13"/>
        <end position="21"/>
    </location>
</feature>
<feature type="strand" evidence="8">
    <location>
        <begin position="29"/>
        <end position="36"/>
    </location>
</feature>
<feature type="strand" evidence="8">
    <location>
        <begin position="38"/>
        <end position="40"/>
    </location>
</feature>
<feature type="strand" evidence="8">
    <location>
        <begin position="42"/>
        <end position="51"/>
    </location>
</feature>
<feature type="strand" evidence="8">
    <location>
        <begin position="60"/>
        <end position="62"/>
    </location>
</feature>
<feature type="strand" evidence="8">
    <location>
        <begin position="66"/>
        <end position="73"/>
    </location>
</feature>
<feature type="strand" evidence="8">
    <location>
        <begin position="82"/>
        <end position="90"/>
    </location>
</feature>
<feature type="turn" evidence="8">
    <location>
        <begin position="91"/>
        <end position="93"/>
    </location>
</feature>
<feature type="strand" evidence="8">
    <location>
        <begin position="95"/>
        <end position="103"/>
    </location>
</feature>
<feature type="turn" evidence="8">
    <location>
        <begin position="107"/>
        <end position="109"/>
    </location>
</feature>
<feature type="strand" evidence="8">
    <location>
        <begin position="113"/>
        <end position="121"/>
    </location>
</feature>
<feature type="helix" evidence="8">
    <location>
        <begin position="127"/>
        <end position="135"/>
    </location>
</feature>
<feature type="strand" evidence="8">
    <location>
        <begin position="150"/>
        <end position="154"/>
    </location>
</feature>
<feature type="strand" evidence="8">
    <location>
        <begin position="157"/>
        <end position="163"/>
    </location>
</feature>
<feature type="strand" evidence="8">
    <location>
        <begin position="165"/>
        <end position="177"/>
    </location>
</feature>
<organism>
    <name type="scientific">Physcomitrium patens</name>
    <name type="common">Spreading-leaved earth moss</name>
    <name type="synonym">Physcomitrella patens</name>
    <dbReference type="NCBI Taxonomy" id="3218"/>
    <lineage>
        <taxon>Eukaryota</taxon>
        <taxon>Viridiplantae</taxon>
        <taxon>Streptophyta</taxon>
        <taxon>Embryophyta</taxon>
        <taxon>Bryophyta</taxon>
        <taxon>Bryophytina</taxon>
        <taxon>Bryopsida</taxon>
        <taxon>Funariidae</taxon>
        <taxon>Funariales</taxon>
        <taxon>Funariaceae</taxon>
        <taxon>Physcomitrium</taxon>
    </lineage>
</organism>
<reference key="1">
    <citation type="submission" date="2004-10" db="EMBL/GenBank/DDBJ databases">
        <authorList>
            <person name="Shin J.S."/>
            <person name="Hoang Q.T."/>
            <person name="Cho S.H."/>
        </authorList>
    </citation>
    <scope>NUCLEOTIDE SEQUENCE [GENOMIC DNA]</scope>
</reference>
<reference key="2">
    <citation type="submission" date="2005-04" db="EMBL/GenBank/DDBJ databases">
        <title>A Novel Cytolysin of Physcomitrella patens, Physcomitrin.</title>
        <authorList>
            <person name="Shin J.S."/>
            <person name="Hoang Q.T."/>
            <person name="Cho S.H."/>
        </authorList>
    </citation>
    <scope>NUCLEOTIDE SEQUENCE [MRNA]</scope>
</reference>
<reference key="3">
    <citation type="journal article" date="2008" name="Science">
        <title>The Physcomitrella genome reveals evolutionary insights into the conquest of land by plants.</title>
        <authorList>
            <person name="Rensing S.A."/>
            <person name="Lang D."/>
            <person name="Zimmer A.D."/>
            <person name="Terry A."/>
            <person name="Salamov A."/>
            <person name="Shapiro H."/>
            <person name="Nishiyama T."/>
            <person name="Perroud P.-F."/>
            <person name="Lindquist E.A."/>
            <person name="Kamisugi Y."/>
            <person name="Tanahashi T."/>
            <person name="Sakakibara K."/>
            <person name="Fujita T."/>
            <person name="Oishi K."/>
            <person name="Shin-I T."/>
            <person name="Kuroki Y."/>
            <person name="Toyoda A."/>
            <person name="Suzuki Y."/>
            <person name="Hashimoto S.-I."/>
            <person name="Yamaguchi K."/>
            <person name="Sugano S."/>
            <person name="Kohara Y."/>
            <person name="Fujiyama A."/>
            <person name="Anterola A."/>
            <person name="Aoki S."/>
            <person name="Ashton N."/>
            <person name="Barbazuk W.B."/>
            <person name="Barker E."/>
            <person name="Bennetzen J.L."/>
            <person name="Blankenship R."/>
            <person name="Cho S.H."/>
            <person name="Dutcher S.K."/>
            <person name="Estelle M."/>
            <person name="Fawcett J.A."/>
            <person name="Gundlach H."/>
            <person name="Hanada K."/>
            <person name="Heyl A."/>
            <person name="Hicks K.A."/>
            <person name="Hughes J."/>
            <person name="Lohr M."/>
            <person name="Mayer K."/>
            <person name="Melkozernov A."/>
            <person name="Murata T."/>
            <person name="Nelson D.R."/>
            <person name="Pils B."/>
            <person name="Prigge M."/>
            <person name="Reiss B."/>
            <person name="Renner T."/>
            <person name="Rombauts S."/>
            <person name="Rushton P.J."/>
            <person name="Sanderfoot A."/>
            <person name="Schween G."/>
            <person name="Shiu S.-H."/>
            <person name="Stueber K."/>
            <person name="Theodoulou F.L."/>
            <person name="Tu H."/>
            <person name="Van de Peer Y."/>
            <person name="Verrier P.J."/>
            <person name="Waters E."/>
            <person name="Wood A."/>
            <person name="Yang L."/>
            <person name="Cove D."/>
            <person name="Cuming A.C."/>
            <person name="Hasebe M."/>
            <person name="Lucas S."/>
            <person name="Mishler B.D."/>
            <person name="Reski R."/>
            <person name="Grigoriev I.V."/>
            <person name="Quatrano R.S."/>
            <person name="Boore J.L."/>
        </authorList>
    </citation>
    <scope>NUCLEOTIDE SEQUENCE [LARGE SCALE GENOMIC DNA]</scope>
    <source>
        <strain>cv. Gransden 2004</strain>
    </source>
</reference>
<reference key="4">
    <citation type="journal article" date="2009" name="New Phytol.">
        <title>An actinoporin plays a key role in water stress in the moss Physcomitrella patens.</title>
        <authorList>
            <person name="Hoang Q.T."/>
            <person name="Cho S.H."/>
            <person name="McDaniel S.F."/>
            <person name="Ok S.H."/>
            <person name="Quatrano R.S."/>
            <person name="Shin J.S."/>
        </authorList>
    </citation>
    <scope>FUNCTION</scope>
    <scope>DEVELOPMENTAL STAGE</scope>
    <scope>INDUCTION</scope>
    <scope>3D-STRUCTURE MODELING</scope>
    <scope>ACTIVITY REGULATION</scope>
</reference>
<dbReference type="EMBL" id="AY762377">
    <property type="protein sequence ID" value="AAV41095.2"/>
    <property type="molecule type" value="mRNA"/>
</dbReference>
<dbReference type="EMBL" id="AY772731">
    <property type="protein sequence ID" value="AAV65396.1"/>
    <property type="molecule type" value="Genomic_DNA"/>
</dbReference>
<dbReference type="EMBL" id="DS545208">
    <property type="protein sequence ID" value="EDQ53098.1"/>
    <property type="status" value="ALT_SEQ"/>
    <property type="molecule type" value="Genomic_DNA"/>
</dbReference>
<dbReference type="RefSeq" id="XP_001782104.1">
    <property type="nucleotide sequence ID" value="XM_001782052.1"/>
</dbReference>
<dbReference type="PDB" id="7PUD">
    <property type="method" value="X-ray"/>
    <property type="resolution" value="1.25 A"/>
    <property type="chains" value="A=1-178"/>
</dbReference>
<dbReference type="PDBsum" id="7PUD"/>
<dbReference type="SMR" id="Q5UCA8"/>
<dbReference type="TCDB" id="1.C.38.1.16">
    <property type="family name" value="the pore-forming equinatoxin (equinatoxin) family"/>
</dbReference>
<dbReference type="PaxDb" id="3218-PP1S319_5V6.1"/>
<dbReference type="EnsemblPlants" id="Pp3c23_22700V3.2">
    <property type="protein sequence ID" value="Pp3c23_22700V3.2"/>
    <property type="gene ID" value="Pp3c23_22700"/>
</dbReference>
<dbReference type="Gramene" id="Pp3c23_22700V3.2">
    <property type="protein sequence ID" value="Pp3c23_22700V3.2"/>
    <property type="gene ID" value="Pp3c23_22700"/>
</dbReference>
<dbReference type="eggNOG" id="ENOG502SGU7">
    <property type="taxonomic scope" value="Eukaryota"/>
</dbReference>
<dbReference type="InParanoid" id="Q5UCA8"/>
<dbReference type="Proteomes" id="UP000006727">
    <property type="component" value="Chromosome 23"/>
</dbReference>
<dbReference type="GO" id="GO:0046930">
    <property type="term" value="C:pore complex"/>
    <property type="evidence" value="ECO:0007669"/>
    <property type="project" value="InterPro"/>
</dbReference>
<dbReference type="GO" id="GO:0015267">
    <property type="term" value="F:channel activity"/>
    <property type="evidence" value="ECO:0007669"/>
    <property type="project" value="InterPro"/>
</dbReference>
<dbReference type="GO" id="GO:0051715">
    <property type="term" value="P:cytolysis in another organism"/>
    <property type="evidence" value="ECO:0007669"/>
    <property type="project" value="InterPro"/>
</dbReference>
<dbReference type="GO" id="GO:0006812">
    <property type="term" value="P:monoatomic cation transport"/>
    <property type="evidence" value="ECO:0007669"/>
    <property type="project" value="InterPro"/>
</dbReference>
<dbReference type="GO" id="GO:0046931">
    <property type="term" value="P:pore complex assembly"/>
    <property type="evidence" value="ECO:0007669"/>
    <property type="project" value="InterPro"/>
</dbReference>
<dbReference type="FunFam" id="2.60.270.20:FF:000001">
    <property type="entry name" value="DELTA-actitoxin-Afr1a"/>
    <property type="match status" value="1"/>
</dbReference>
<dbReference type="Gene3D" id="2.60.270.20">
    <property type="entry name" value="Cytolysin/lectin"/>
    <property type="match status" value="1"/>
</dbReference>
<dbReference type="InterPro" id="IPR050677">
    <property type="entry name" value="Actinoporin_PFT"/>
</dbReference>
<dbReference type="InterPro" id="IPR009104">
    <property type="entry name" value="Anemon_actinoporin-like"/>
</dbReference>
<dbReference type="InterPro" id="IPR015926">
    <property type="entry name" value="Cytolysin/lectin"/>
</dbReference>
<dbReference type="PANTHER" id="PTHR40388">
    <property type="entry name" value="BRYOPORIN"/>
    <property type="match status" value="1"/>
</dbReference>
<dbReference type="PANTHER" id="PTHR40388:SF1">
    <property type="entry name" value="BRYOPORIN"/>
    <property type="match status" value="1"/>
</dbReference>
<dbReference type="Pfam" id="PF06369">
    <property type="entry name" value="Anemone_cytotox"/>
    <property type="match status" value="1"/>
</dbReference>
<dbReference type="SUPFAM" id="SSF63724">
    <property type="entry name" value="Cytolysin/lectin"/>
    <property type="match status" value="1"/>
</dbReference>
<proteinExistence type="evidence at protein level"/>
<gene>
    <name evidence="7" type="ORF">PHYPADRAFT_61094</name>
</gene>
<protein>
    <recommendedName>
        <fullName evidence="4">Bryoporin</fullName>
        <shortName evidence="4">PpBP</shortName>
    </recommendedName>
    <alternativeName>
        <fullName evidence="5">Physcomitrin</fullName>
    </alternativeName>
</protein>
<comment type="function">
    <text evidence="3">Actinoporin-related protein having hemolytic activity in vitro. Binds probably a phosphocholine derivative with the unique amido or hydroxyl groups found in sphingomyelin. Involved in drought tolerance.</text>
</comment>
<comment type="activity regulation">
    <text evidence="3">Inhibited by sphingomyelin.</text>
</comment>
<comment type="developmental stage">
    <text evidence="3">Very low expression in protonema. Expressed in gametophores, with a maximal level in mature gametophores.</text>
</comment>
<comment type="induction">
    <text evidence="3">Strongly up-regulated by abscisic acid, osmotic stress and drought, up-regulated by wounding, jasmonic acid or salicylic acid and not induced by salt, cold or auxins.</text>
</comment>
<comment type="domain">
    <text evidence="2">The Trp-rich region is important for the binding to lipid membrane.</text>
</comment>
<comment type="similarity">
    <text evidence="6">Belongs to the actinoporin family. Plant subfamily.</text>
</comment>
<comment type="sequence caution" evidence="6">
    <conflict type="erroneous gene model prediction">
        <sequence resource="EMBL-CDS" id="EDQ53098"/>
    </conflict>
</comment>
<sequence>MAEAIIPAAELSIKTLQNIVEGITGVDRKIAIGFKNLTDYTLENLGVYFNSGSSDRSIAYKINAQEALLFSARKSDHTARGTVGTFSYYIQDEDKTVHVMWSVPFDYNLYSNWWNIAVVDGRQPPDSNVHDNLYNGSGGMPYPNKPDQYINNEQKGFHLFGSMTNNGQATIEVELKKA</sequence>
<accession>Q5UCA8</accession>
<accession>A9TTZ8</accession>